<accession>P77182</accession>
<name>MNMC_ECOLI</name>
<reference key="1">
    <citation type="journal article" date="1997" name="DNA Res.">
        <title>Construction of a contiguous 874-kb sequence of the Escherichia coli-K12 genome corresponding to 50.0-68.8 min on the linkage map and analysis of its sequence features.</title>
        <authorList>
            <person name="Yamamoto Y."/>
            <person name="Aiba H."/>
            <person name="Baba T."/>
            <person name="Hayashi K."/>
            <person name="Inada T."/>
            <person name="Isono K."/>
            <person name="Itoh T."/>
            <person name="Kimura S."/>
            <person name="Kitagawa M."/>
            <person name="Makino K."/>
            <person name="Miki T."/>
            <person name="Mitsuhashi N."/>
            <person name="Mizobuchi K."/>
            <person name="Mori H."/>
            <person name="Nakade S."/>
            <person name="Nakamura Y."/>
            <person name="Nashimoto H."/>
            <person name="Oshima T."/>
            <person name="Oyama S."/>
            <person name="Saito N."/>
            <person name="Sampei G."/>
            <person name="Satoh Y."/>
            <person name="Sivasundaram S."/>
            <person name="Tagami H."/>
            <person name="Takahashi H."/>
            <person name="Takeda J."/>
            <person name="Takemoto K."/>
            <person name="Uehara K."/>
            <person name="Wada C."/>
            <person name="Yamagata S."/>
            <person name="Horiuchi T."/>
        </authorList>
    </citation>
    <scope>NUCLEOTIDE SEQUENCE [LARGE SCALE GENOMIC DNA]</scope>
    <source>
        <strain>K12 / W3110 / ATCC 27325 / DSM 5911</strain>
    </source>
</reference>
<reference key="2">
    <citation type="journal article" date="1997" name="Science">
        <title>The complete genome sequence of Escherichia coli K-12.</title>
        <authorList>
            <person name="Blattner F.R."/>
            <person name="Plunkett G. III"/>
            <person name="Bloch C.A."/>
            <person name="Perna N.T."/>
            <person name="Burland V."/>
            <person name="Riley M."/>
            <person name="Collado-Vides J."/>
            <person name="Glasner J.D."/>
            <person name="Rode C.K."/>
            <person name="Mayhew G.F."/>
            <person name="Gregor J."/>
            <person name="Davis N.W."/>
            <person name="Kirkpatrick H.A."/>
            <person name="Goeden M.A."/>
            <person name="Rose D.J."/>
            <person name="Mau B."/>
            <person name="Shao Y."/>
        </authorList>
    </citation>
    <scope>NUCLEOTIDE SEQUENCE [LARGE SCALE GENOMIC DNA]</scope>
    <source>
        <strain>K12 / MG1655 / ATCC 47076</strain>
    </source>
</reference>
<reference key="3">
    <citation type="journal article" date="2006" name="Mol. Syst. Biol.">
        <title>Highly accurate genome sequences of Escherichia coli K-12 strains MG1655 and W3110.</title>
        <authorList>
            <person name="Hayashi K."/>
            <person name="Morooka N."/>
            <person name="Yamamoto Y."/>
            <person name="Fujita K."/>
            <person name="Isono K."/>
            <person name="Choi S."/>
            <person name="Ohtsubo E."/>
            <person name="Baba T."/>
            <person name="Wanner B.L."/>
            <person name="Mori H."/>
            <person name="Horiuchi T."/>
        </authorList>
    </citation>
    <scope>NUCLEOTIDE SEQUENCE [LARGE SCALE GENOMIC DNA]</scope>
    <source>
        <strain>K12 / W3110 / ATCC 27325 / DSM 5911</strain>
    </source>
</reference>
<reference key="4">
    <citation type="journal article" date="2004" name="RNA">
        <title>Identification of a bifunctional enzyme MnmC involved in the biosynthesis of a hypermodified uridine in the wobble position of tRNA.</title>
        <authorList>
            <person name="Bujnicki J.M."/>
            <person name="Oudjama Y."/>
            <person name="Roovers M."/>
            <person name="Owczarek S."/>
            <person name="Caillet J."/>
            <person name="Droogmans L."/>
        </authorList>
    </citation>
    <scope>FUNCTION IN MNM(5)S(2)U34 BIOSYNTHESIS</scope>
    <scope>COFACTOR</scope>
</reference>
<reference key="5">
    <citation type="journal article" date="2008" name="Proteins">
        <title>Sequence-structure-function analysis of the bifunctional enzyme MnmC that catalyses the last two steps in the biosynthesis of hypermodified nucleoside mnm5s2U in tRNA.</title>
        <authorList>
            <person name="Roovers M."/>
            <person name="Oudjama Y."/>
            <person name="Kaminska K.H."/>
            <person name="Purta E."/>
            <person name="Caillet J."/>
            <person name="Droogmans L."/>
            <person name="Bujnicki J.M."/>
        </authorList>
    </citation>
    <scope>FUNCTION</scope>
    <scope>COFACTOR</scope>
    <scope>MUTAGENESIS OF GLU-64; ASP-178; PHE-180; GLY-271; ARG-567 AND ARG-618</scope>
</reference>
<sequence length="668" mass="74434">MKHYSIQPANLEFNAEGTPVSRDFDDVYFSNDNGLEETRYVFLGGNQLEVRFPEHPHPLFVVAESGFGTGLNFLTLWQAFDQFREAHPQAQLQRLHFISFEKFPLTRADLALAHQHWPELAPWAEQLQAQWPMPLPGCHRLLLDEGRVTLDLWFGDINELTSQLDDSLNQKVDAWFLDGFAPAKNPDMWTQNLFNAMARLARPGGTLATFTSAGFVRRGLQDAGFTMQKRKGFGRKREMLCGVMEQTLPLPCSAPWFNRTGSSKREAAIIGGGIASALLSLALLRRGWQVTLYCADEAPALGASGNRQGALYPLLSKHDEALNRFFSNAFTFARRFYDQLPVKFDHDWCGVTQLGWDEKSQHKIAQMLSMDLPAELAVAVEANAVEQITGVATNCSGITYPQGGWLCPAELTRNVLELAQQQGLQIYYQYQLQNLSRKDDCWLLNFAGDQQATHSVVVLANGHQISRFSQTSTLPVYSVAGQVSHIPTTPELAELKQVLCYDGYLTPQNPANQHHCIGASYHRGSEDTAYSEDDQQQNRQRLIDCFPQAQWAKEVDVSDKEARCGVRCATRDHLPMVGNVPDYEATLVEYASLAEQKDEAVSAPVFDDLFMFAALGSRGLCSAPLCAEILAAQMSDEPIPMDASTLAALNPNRLWVRKLLKGKAVKAG</sequence>
<feature type="chain" id="PRO_0000095012" description="tRNA 5-methylaminomethyl-2-thiouridine biosynthesis bifunctional protein MnmC">
    <location>
        <begin position="1"/>
        <end position="668"/>
    </location>
</feature>
<feature type="region of interest" description="tRNA (mnm(5)s(2)U34)-methyltransferase">
    <location>
        <begin position="1"/>
        <end position="245"/>
    </location>
</feature>
<feature type="region of interest" description="FAD-dependent cmnm(5)s(2)U34 oxidoreductase">
    <location>
        <begin position="270"/>
        <end position="668"/>
    </location>
</feature>
<feature type="mutagenesis site" description="Loss of methyltransferase activity." evidence="2">
    <original>E</original>
    <variation>A</variation>
    <location>
        <position position="64"/>
    </location>
</feature>
<feature type="mutagenesis site" description="Strong decrease in methyltransferase activity." evidence="2">
    <original>D</original>
    <variation>A</variation>
    <location>
        <position position="178"/>
    </location>
</feature>
<feature type="mutagenesis site" description="Strong decrease in methyltransferase activity." evidence="2">
    <original>F</original>
    <variation>A</variation>
    <location>
        <position position="180"/>
    </location>
</feature>
<feature type="mutagenesis site" description="4-fold decrease in activity, but no change in FAD binding." evidence="2">
    <original>G</original>
    <variation>Q</variation>
    <location>
        <position position="271"/>
    </location>
</feature>
<feature type="mutagenesis site" description="Loss of activity, but no change in FAD binding." evidence="2">
    <original>R</original>
    <variation>A</variation>
    <location>
        <position position="567"/>
    </location>
</feature>
<feature type="mutagenesis site" description="Loss of activity, but no change in FAD binding." evidence="2">
    <original>R</original>
    <variation>A</variation>
    <location>
        <position position="618"/>
    </location>
</feature>
<feature type="helix" evidence="4">
    <location>
        <begin position="36"/>
        <end position="45"/>
    </location>
</feature>
<feature type="helix" evidence="4">
    <location>
        <begin position="48"/>
        <end position="54"/>
    </location>
</feature>
<feature type="strand" evidence="4">
    <location>
        <begin position="57"/>
        <end position="65"/>
    </location>
</feature>
<feature type="helix" evidence="4">
    <location>
        <begin position="71"/>
        <end position="86"/>
    </location>
</feature>
<feature type="strand" evidence="4">
    <location>
        <begin position="94"/>
        <end position="103"/>
    </location>
</feature>
<feature type="helix" evidence="4">
    <location>
        <begin position="108"/>
        <end position="114"/>
    </location>
</feature>
<feature type="helix" evidence="4">
    <location>
        <begin position="118"/>
        <end position="120"/>
    </location>
</feature>
<feature type="helix" evidence="4">
    <location>
        <begin position="121"/>
        <end position="129"/>
    </location>
</feature>
<feature type="strand" evidence="4">
    <location>
        <begin position="136"/>
        <end position="143"/>
    </location>
</feature>
<feature type="turn" evidence="4">
    <location>
        <begin position="144"/>
        <end position="147"/>
    </location>
</feature>
<feature type="strand" evidence="4">
    <location>
        <begin position="148"/>
        <end position="155"/>
    </location>
</feature>
<feature type="helix" evidence="4">
    <location>
        <begin position="157"/>
        <end position="163"/>
    </location>
</feature>
<feature type="helix" evidence="4">
    <location>
        <begin position="166"/>
        <end position="168"/>
    </location>
</feature>
<feature type="strand" evidence="4">
    <location>
        <begin position="172"/>
        <end position="177"/>
    </location>
</feature>
<feature type="turn" evidence="4">
    <location>
        <begin position="182"/>
        <end position="184"/>
    </location>
</feature>
<feature type="helix" evidence="4">
    <location>
        <begin position="191"/>
        <end position="200"/>
    </location>
</feature>
<feature type="strand" evidence="4">
    <location>
        <begin position="201"/>
        <end position="210"/>
    </location>
</feature>
<feature type="helix" evidence="4">
    <location>
        <begin position="214"/>
        <end position="222"/>
    </location>
</feature>
<feature type="strand" evidence="4">
    <location>
        <begin position="226"/>
        <end position="230"/>
    </location>
</feature>
<feature type="strand" evidence="4">
    <location>
        <begin position="239"/>
        <end position="243"/>
    </location>
</feature>
<feature type="helix" evidence="4">
    <location>
        <begin position="255"/>
        <end position="257"/>
    </location>
</feature>
<feature type="strand" evidence="4">
    <location>
        <begin position="266"/>
        <end position="270"/>
    </location>
</feature>
<feature type="helix" evidence="4">
    <location>
        <begin position="274"/>
        <end position="285"/>
    </location>
</feature>
<feature type="strand" evidence="4">
    <location>
        <begin position="289"/>
        <end position="300"/>
    </location>
</feature>
<feature type="helix" evidence="4">
    <location>
        <begin position="303"/>
        <end position="305"/>
    </location>
</feature>
<feature type="strand" evidence="4">
    <location>
        <begin position="307"/>
        <end position="311"/>
    </location>
</feature>
<feature type="helix" evidence="4">
    <location>
        <begin position="320"/>
        <end position="339"/>
    </location>
</feature>
<feature type="strand" evidence="4">
    <location>
        <begin position="351"/>
        <end position="354"/>
    </location>
</feature>
<feature type="helix" evidence="4">
    <location>
        <begin position="358"/>
        <end position="369"/>
    </location>
</feature>
<feature type="turn" evidence="4">
    <location>
        <begin position="374"/>
        <end position="376"/>
    </location>
</feature>
<feature type="strand" evidence="4">
    <location>
        <begin position="378"/>
        <end position="380"/>
    </location>
</feature>
<feature type="helix" evidence="4">
    <location>
        <begin position="382"/>
        <end position="389"/>
    </location>
</feature>
<feature type="strand" evidence="4">
    <location>
        <begin position="397"/>
        <end position="400"/>
    </location>
</feature>
<feature type="strand" evidence="4">
    <location>
        <begin position="404"/>
        <end position="406"/>
    </location>
</feature>
<feature type="helix" evidence="4">
    <location>
        <begin position="408"/>
        <end position="421"/>
    </location>
</feature>
<feature type="strand" evidence="4">
    <location>
        <begin position="425"/>
        <end position="428"/>
    </location>
</feature>
<feature type="strand" evidence="4">
    <location>
        <begin position="432"/>
        <end position="437"/>
    </location>
</feature>
<feature type="strand" evidence="4">
    <location>
        <begin position="439"/>
        <end position="446"/>
    </location>
</feature>
<feature type="turn" evidence="4">
    <location>
        <begin position="447"/>
        <end position="449"/>
    </location>
</feature>
<feature type="strand" evidence="4">
    <location>
        <begin position="450"/>
        <end position="459"/>
    </location>
</feature>
<feature type="helix" evidence="4">
    <location>
        <begin position="462"/>
        <end position="464"/>
    </location>
</feature>
<feature type="turn" evidence="4">
    <location>
        <begin position="469"/>
        <end position="473"/>
    </location>
</feature>
<feature type="strand" evidence="4">
    <location>
        <begin position="477"/>
        <end position="487"/>
    </location>
</feature>
<feature type="helix" evidence="4">
    <location>
        <begin position="492"/>
        <end position="494"/>
    </location>
</feature>
<feature type="strand" evidence="4">
    <location>
        <begin position="497"/>
        <end position="505"/>
    </location>
</feature>
<feature type="turn" evidence="4">
    <location>
        <begin position="510"/>
        <end position="512"/>
    </location>
</feature>
<feature type="strand" evidence="4">
    <location>
        <begin position="513"/>
        <end position="518"/>
    </location>
</feature>
<feature type="helix" evidence="4">
    <location>
        <begin position="532"/>
        <end position="545"/>
    </location>
</feature>
<feature type="helix" evidence="4">
    <location>
        <begin position="550"/>
        <end position="553"/>
    </location>
</feature>
<feature type="strand" evidence="4">
    <location>
        <begin position="562"/>
        <end position="569"/>
    </location>
</feature>
<feature type="helix" evidence="4">
    <location>
        <begin position="571"/>
        <end position="573"/>
    </location>
</feature>
<feature type="strand" evidence="4">
    <location>
        <begin position="576"/>
        <end position="581"/>
    </location>
</feature>
<feature type="helix" evidence="4">
    <location>
        <begin position="583"/>
        <end position="588"/>
    </location>
</feature>
<feature type="helix" evidence="4">
    <location>
        <begin position="594"/>
        <end position="596"/>
    </location>
</feature>
<feature type="strand" evidence="4">
    <location>
        <begin position="605"/>
        <end position="613"/>
    </location>
</feature>
<feature type="helix" evidence="4">
    <location>
        <begin position="619"/>
        <end position="634"/>
    </location>
</feature>
<feature type="helix" evidence="4">
    <location>
        <begin position="643"/>
        <end position="649"/>
    </location>
</feature>
<feature type="helix" evidence="4">
    <location>
        <begin position="653"/>
        <end position="660"/>
    </location>
</feature>
<proteinExistence type="evidence at protein level"/>
<comment type="function">
    <text evidence="1 2">Catalyzes the last two steps in the biosynthesis of 5-methylaminomethyl-2-thiouridine (mnm(5)s(2)U) at the wobble position (U34) in tRNA. Catalyzes the FAD-dependent demodification of cmnm(5)s(2)U34 to nm(5)s(2)U34, followed by the transfer of a methyl group from S-adenosyl-L-methionine to nm(5)s(2)U34, to form mnm(5)s(2)U34.</text>
</comment>
<comment type="catalytic activity">
    <reaction>
        <text>5-aminomethyl-2-thiouridine(34) in tRNA + S-adenosyl-L-methionine = 5-methylaminomethyl-2-thiouridine(34) in tRNA + S-adenosyl-L-homocysteine + H(+)</text>
        <dbReference type="Rhea" id="RHEA:19569"/>
        <dbReference type="Rhea" id="RHEA-COMP:10195"/>
        <dbReference type="Rhea" id="RHEA-COMP:10197"/>
        <dbReference type="ChEBI" id="CHEBI:15378"/>
        <dbReference type="ChEBI" id="CHEBI:57856"/>
        <dbReference type="ChEBI" id="CHEBI:59789"/>
        <dbReference type="ChEBI" id="CHEBI:74454"/>
        <dbReference type="ChEBI" id="CHEBI:74455"/>
        <dbReference type="EC" id="2.1.1.61"/>
    </reaction>
</comment>
<comment type="cofactor">
    <cofactor evidence="1 2">
        <name>FAD</name>
        <dbReference type="ChEBI" id="CHEBI:57692"/>
    </cofactor>
</comment>
<comment type="subcellular location">
    <subcellularLocation>
        <location evidence="3">Cytoplasm</location>
    </subcellularLocation>
</comment>
<comment type="similarity">
    <text evidence="3">In the N-terminal section; belongs to the methyltransferase superfamily. tRNA (mnm(5)s(2)U34)-methyltransferase family.</text>
</comment>
<comment type="similarity">
    <text evidence="3">In the C-terminal section; belongs to the DAO family.</text>
</comment>
<evidence type="ECO:0000269" key="1">
    <source>
    </source>
</evidence>
<evidence type="ECO:0000269" key="2">
    <source>
    </source>
</evidence>
<evidence type="ECO:0000305" key="3"/>
<evidence type="ECO:0007829" key="4">
    <source>
        <dbReference type="PDB" id="3AWI"/>
    </source>
</evidence>
<keyword id="KW-0002">3D-structure</keyword>
<keyword id="KW-0963">Cytoplasm</keyword>
<keyword id="KW-0274">FAD</keyword>
<keyword id="KW-0285">Flavoprotein</keyword>
<keyword id="KW-0489">Methyltransferase</keyword>
<keyword id="KW-0511">Multifunctional enzyme</keyword>
<keyword id="KW-0560">Oxidoreductase</keyword>
<keyword id="KW-1185">Reference proteome</keyword>
<keyword id="KW-0949">S-adenosyl-L-methionine</keyword>
<keyword id="KW-0808">Transferase</keyword>
<keyword id="KW-0819">tRNA processing</keyword>
<dbReference type="EC" id="2.1.1.61"/>
<dbReference type="EC" id="1.5.-.-"/>
<dbReference type="EMBL" id="U00096">
    <property type="protein sequence ID" value="AAC75384.2"/>
    <property type="molecule type" value="Genomic_DNA"/>
</dbReference>
<dbReference type="EMBL" id="AP009048">
    <property type="protein sequence ID" value="BAA16181.2"/>
    <property type="molecule type" value="Genomic_DNA"/>
</dbReference>
<dbReference type="PIR" id="B65005">
    <property type="entry name" value="B65005"/>
</dbReference>
<dbReference type="RefSeq" id="NP_416827.4">
    <property type="nucleotide sequence ID" value="NC_000913.3"/>
</dbReference>
<dbReference type="RefSeq" id="WP_000683799.1">
    <property type="nucleotide sequence ID" value="NZ_LN832404.1"/>
</dbReference>
<dbReference type="PDB" id="3AWI">
    <property type="method" value="X-ray"/>
    <property type="resolution" value="3.00 A"/>
    <property type="chains" value="A/B/C/D/E/F=1-668"/>
</dbReference>
<dbReference type="PDBsum" id="3AWI"/>
<dbReference type="SMR" id="P77182"/>
<dbReference type="BioGRID" id="4261069">
    <property type="interactions" value="23"/>
</dbReference>
<dbReference type="DIP" id="DIP-28058N"/>
<dbReference type="FunCoup" id="P77182">
    <property type="interactions" value="122"/>
</dbReference>
<dbReference type="IntAct" id="P77182">
    <property type="interactions" value="1"/>
</dbReference>
<dbReference type="STRING" id="511145.b2324"/>
<dbReference type="jPOST" id="P77182"/>
<dbReference type="PaxDb" id="511145-b2324"/>
<dbReference type="EnsemblBacteria" id="AAC75384">
    <property type="protein sequence ID" value="AAC75384"/>
    <property type="gene ID" value="b2324"/>
</dbReference>
<dbReference type="GeneID" id="946800"/>
<dbReference type="KEGG" id="ecj:JW5380"/>
<dbReference type="KEGG" id="eco:b2324"/>
<dbReference type="KEGG" id="ecoc:C3026_12950"/>
<dbReference type="PATRIC" id="fig|511145.12.peg.2420"/>
<dbReference type="EchoBASE" id="EB3867"/>
<dbReference type="eggNOG" id="COG0665">
    <property type="taxonomic scope" value="Bacteria"/>
</dbReference>
<dbReference type="eggNOG" id="COG4121">
    <property type="taxonomic scope" value="Bacteria"/>
</dbReference>
<dbReference type="HOGENOM" id="CLU_022427_1_0_6"/>
<dbReference type="InParanoid" id="P77182"/>
<dbReference type="OMA" id="NFLCAWQ"/>
<dbReference type="OrthoDB" id="9786494at2"/>
<dbReference type="PhylomeDB" id="P77182"/>
<dbReference type="BioCyc" id="EcoCyc:G7199-MONOMER"/>
<dbReference type="BioCyc" id="MetaCyc:G7199-MONOMER"/>
<dbReference type="BRENDA" id="2.1.1.229">
    <property type="organism ID" value="2026"/>
</dbReference>
<dbReference type="EvolutionaryTrace" id="P77182"/>
<dbReference type="PRO" id="PR:P77182"/>
<dbReference type="Proteomes" id="UP000000625">
    <property type="component" value="Chromosome"/>
</dbReference>
<dbReference type="GO" id="GO:0005737">
    <property type="term" value="C:cytoplasm"/>
    <property type="evidence" value="ECO:0000318"/>
    <property type="project" value="GO_Central"/>
</dbReference>
<dbReference type="GO" id="GO:0071949">
    <property type="term" value="F:FAD binding"/>
    <property type="evidence" value="ECO:0000314"/>
    <property type="project" value="EcoCyc"/>
</dbReference>
<dbReference type="GO" id="GO:0016645">
    <property type="term" value="F:oxidoreductase activity, acting on the CH-NH group of donors"/>
    <property type="evidence" value="ECO:0007669"/>
    <property type="project" value="InterPro"/>
</dbReference>
<dbReference type="GO" id="GO:0004808">
    <property type="term" value="F:tRNA (5-methylaminomethyl-2-thiouridylate)(34)-methyltransferase activity"/>
    <property type="evidence" value="ECO:0000314"/>
    <property type="project" value="EcoCyc"/>
</dbReference>
<dbReference type="GO" id="GO:0030488">
    <property type="term" value="P:tRNA methylation"/>
    <property type="evidence" value="ECO:0000315"/>
    <property type="project" value="EcoCyc"/>
</dbReference>
<dbReference type="GO" id="GO:0002098">
    <property type="term" value="P:tRNA wobble uridine modification"/>
    <property type="evidence" value="ECO:0000315"/>
    <property type="project" value="EcoCyc"/>
</dbReference>
<dbReference type="FunFam" id="3.40.50.150:FF:000107">
    <property type="entry name" value="tRNA 5-methylaminomethyl-2-thiouridine biosynthesis bifunctional protein MnmC"/>
    <property type="match status" value="1"/>
</dbReference>
<dbReference type="Gene3D" id="3.30.9.10">
    <property type="entry name" value="D-Amino Acid Oxidase, subunit A, domain 2"/>
    <property type="match status" value="1"/>
</dbReference>
<dbReference type="Gene3D" id="3.50.50.60">
    <property type="entry name" value="FAD/NAD(P)-binding domain"/>
    <property type="match status" value="1"/>
</dbReference>
<dbReference type="Gene3D" id="3.40.50.150">
    <property type="entry name" value="Vaccinia Virus protein VP39"/>
    <property type="match status" value="1"/>
</dbReference>
<dbReference type="HAMAP" id="MF_01102">
    <property type="entry name" value="MnmC"/>
    <property type="match status" value="1"/>
</dbReference>
<dbReference type="InterPro" id="IPR006076">
    <property type="entry name" value="FAD-dep_OxRdtase"/>
</dbReference>
<dbReference type="InterPro" id="IPR036188">
    <property type="entry name" value="FAD/NAD-bd_sf"/>
</dbReference>
<dbReference type="InterPro" id="IPR008471">
    <property type="entry name" value="MnmC-like_methylTransf"/>
</dbReference>
<dbReference type="InterPro" id="IPR029063">
    <property type="entry name" value="SAM-dependent_MTases_sf"/>
</dbReference>
<dbReference type="InterPro" id="IPR023032">
    <property type="entry name" value="tRNA_MAMT_biosynth_bifunc_MnmC"/>
</dbReference>
<dbReference type="InterPro" id="IPR047785">
    <property type="entry name" value="tRNA_MNMC2"/>
</dbReference>
<dbReference type="InterPro" id="IPR017610">
    <property type="entry name" value="tRNA_S-uridine_synth_MnmC_C"/>
</dbReference>
<dbReference type="NCBIfam" id="TIGR03197">
    <property type="entry name" value="MnmC_Cterm"/>
    <property type="match status" value="1"/>
</dbReference>
<dbReference type="NCBIfam" id="NF002480">
    <property type="entry name" value="PRK01747.1-1"/>
    <property type="match status" value="1"/>
</dbReference>
<dbReference type="NCBIfam" id="NF002481">
    <property type="entry name" value="PRK01747.1-2"/>
    <property type="match status" value="1"/>
</dbReference>
<dbReference type="NCBIfam" id="NF002482">
    <property type="entry name" value="PRK01747.1-3"/>
    <property type="match status" value="1"/>
</dbReference>
<dbReference type="NCBIfam" id="NF002484">
    <property type="entry name" value="PRK01747.1-5"/>
    <property type="match status" value="1"/>
</dbReference>
<dbReference type="NCBIfam" id="NF033855">
    <property type="entry name" value="tRNA_MNMC2"/>
    <property type="match status" value="1"/>
</dbReference>
<dbReference type="PANTHER" id="PTHR13847">
    <property type="entry name" value="SARCOSINE DEHYDROGENASE-RELATED"/>
    <property type="match status" value="1"/>
</dbReference>
<dbReference type="PANTHER" id="PTHR13847:SF283">
    <property type="entry name" value="TRNA 5-METHYLAMINOMETHYL-2-THIOURIDINE BIOSYNTHESIS BIFUNCTIONAL PROTEIN MNMC"/>
    <property type="match status" value="1"/>
</dbReference>
<dbReference type="Pfam" id="PF01266">
    <property type="entry name" value="DAO"/>
    <property type="match status" value="1"/>
</dbReference>
<dbReference type="Pfam" id="PF05430">
    <property type="entry name" value="Methyltransf_30"/>
    <property type="match status" value="1"/>
</dbReference>
<dbReference type="SUPFAM" id="SSF51905">
    <property type="entry name" value="FAD/NAD(P)-binding domain"/>
    <property type="match status" value="1"/>
</dbReference>
<organism>
    <name type="scientific">Escherichia coli (strain K12)</name>
    <dbReference type="NCBI Taxonomy" id="83333"/>
    <lineage>
        <taxon>Bacteria</taxon>
        <taxon>Pseudomonadati</taxon>
        <taxon>Pseudomonadota</taxon>
        <taxon>Gammaproteobacteria</taxon>
        <taxon>Enterobacterales</taxon>
        <taxon>Enterobacteriaceae</taxon>
        <taxon>Escherichia</taxon>
    </lineage>
</organism>
<gene>
    <name type="primary">mnmC</name>
    <name type="synonym">yfcK</name>
    <name type="ordered locus">b2324</name>
    <name type="ordered locus">JW5380</name>
</gene>
<protein>
    <recommendedName>
        <fullName>tRNA 5-methylaminomethyl-2-thiouridine biosynthesis bifunctional protein MnmC</fullName>
        <shortName>tRNA mnm(5)s(2)U biosynthesis bifunctional protein</shortName>
    </recommendedName>
    <domain>
        <recommendedName>
            <fullName>tRNA (mnm(5)s(2)U34)-methyltransferase</fullName>
            <ecNumber>2.1.1.61</ecNumber>
        </recommendedName>
    </domain>
    <domain>
        <recommendedName>
            <fullName>FAD-dependent cmnm(5)s(2)U34 oxidoreductase</fullName>
            <ecNumber>1.5.-.-</ecNumber>
        </recommendedName>
    </domain>
</protein>